<proteinExistence type="evidence at protein level"/>
<name>PSAB_ARATH</name>
<reference key="1">
    <citation type="journal article" date="1999" name="DNA Res.">
        <title>Complete structure of the chloroplast genome of Arabidopsis thaliana.</title>
        <authorList>
            <person name="Sato S."/>
            <person name="Nakamura Y."/>
            <person name="Kaneko T."/>
            <person name="Asamizu E."/>
            <person name="Tabata S."/>
        </authorList>
    </citation>
    <scope>NUCLEOTIDE SEQUENCE [LARGE SCALE GENOMIC DNA]</scope>
    <source>
        <strain>cv. Columbia</strain>
    </source>
</reference>
<gene>
    <name evidence="1" type="primary">psaB</name>
    <name type="ordered locus">AtCg00340</name>
</gene>
<organism>
    <name type="scientific">Arabidopsis thaliana</name>
    <name type="common">Mouse-ear cress</name>
    <dbReference type="NCBI Taxonomy" id="3702"/>
    <lineage>
        <taxon>Eukaryota</taxon>
        <taxon>Viridiplantae</taxon>
        <taxon>Streptophyta</taxon>
        <taxon>Embryophyta</taxon>
        <taxon>Tracheophyta</taxon>
        <taxon>Spermatophyta</taxon>
        <taxon>Magnoliopsida</taxon>
        <taxon>eudicotyledons</taxon>
        <taxon>Gunneridae</taxon>
        <taxon>Pentapetalae</taxon>
        <taxon>rosids</taxon>
        <taxon>malvids</taxon>
        <taxon>Brassicales</taxon>
        <taxon>Brassicaceae</taxon>
        <taxon>Camelineae</taxon>
        <taxon>Arabidopsis</taxon>
    </lineage>
</organism>
<geneLocation type="chloroplast"/>
<feature type="chain" id="PRO_0000088604" description="Photosystem I P700 chlorophyll a apoprotein A2">
    <location>
        <begin position="1"/>
        <end position="734"/>
    </location>
</feature>
<feature type="transmembrane region" description="Helical; Name=I" evidence="1">
    <location>
        <begin position="46"/>
        <end position="69"/>
    </location>
</feature>
<feature type="transmembrane region" description="Helical; Name=II" evidence="1">
    <location>
        <begin position="135"/>
        <end position="158"/>
    </location>
</feature>
<feature type="transmembrane region" description="Helical; Name=III" evidence="1">
    <location>
        <begin position="175"/>
        <end position="199"/>
    </location>
</feature>
<feature type="transmembrane region" description="Helical; Name=IV" evidence="1">
    <location>
        <begin position="273"/>
        <end position="291"/>
    </location>
</feature>
<feature type="transmembrane region" description="Helical; Name=V" evidence="1">
    <location>
        <begin position="330"/>
        <end position="353"/>
    </location>
</feature>
<feature type="transmembrane region" description="Helical; Name=VI" evidence="1">
    <location>
        <begin position="369"/>
        <end position="395"/>
    </location>
</feature>
<feature type="transmembrane region" description="Helical; Name=VII" evidence="1">
    <location>
        <begin position="417"/>
        <end position="439"/>
    </location>
</feature>
<feature type="transmembrane region" description="Helical; Name=VIII" evidence="1">
    <location>
        <begin position="517"/>
        <end position="535"/>
    </location>
</feature>
<feature type="transmembrane region" description="Helical; Name=IX" evidence="1">
    <location>
        <begin position="575"/>
        <end position="596"/>
    </location>
</feature>
<feature type="transmembrane region" description="Helical; Name=X" evidence="1">
    <location>
        <begin position="643"/>
        <end position="665"/>
    </location>
</feature>
<feature type="transmembrane region" description="Helical; Name=XI" evidence="1">
    <location>
        <begin position="707"/>
        <end position="727"/>
    </location>
</feature>
<feature type="binding site" evidence="1">
    <location>
        <position position="559"/>
    </location>
    <ligand>
        <name>[4Fe-4S] cluster</name>
        <dbReference type="ChEBI" id="CHEBI:49883"/>
        <note>ligand shared between dimeric partners</note>
    </ligand>
</feature>
<feature type="binding site" evidence="1">
    <location>
        <position position="568"/>
    </location>
    <ligand>
        <name>[4Fe-4S] cluster</name>
        <dbReference type="ChEBI" id="CHEBI:49883"/>
        <note>ligand shared between dimeric partners</note>
    </ligand>
</feature>
<feature type="binding site" description="axial binding residue" evidence="1">
    <location>
        <position position="654"/>
    </location>
    <ligand>
        <name>chlorophyll a</name>
        <dbReference type="ChEBI" id="CHEBI:58416"/>
        <label>B1</label>
    </ligand>
    <ligandPart>
        <name>Mg</name>
        <dbReference type="ChEBI" id="CHEBI:25107"/>
    </ligandPart>
</feature>
<feature type="binding site" description="axial binding residue" evidence="1">
    <location>
        <position position="662"/>
    </location>
    <ligand>
        <name>chlorophyll a</name>
        <dbReference type="ChEBI" id="CHEBI:58416"/>
        <label>B3</label>
    </ligand>
    <ligandPart>
        <name>Mg</name>
        <dbReference type="ChEBI" id="CHEBI:25107"/>
    </ligandPart>
</feature>
<feature type="binding site" evidence="1">
    <location>
        <position position="670"/>
    </location>
    <ligand>
        <name>chlorophyll a</name>
        <dbReference type="ChEBI" id="CHEBI:58416"/>
        <label>B3</label>
    </ligand>
</feature>
<feature type="binding site" evidence="1">
    <location>
        <position position="671"/>
    </location>
    <ligand>
        <name>phylloquinone</name>
        <dbReference type="ChEBI" id="CHEBI:18067"/>
        <label>B</label>
    </ligand>
</feature>
<feature type="helix" evidence="2">
    <location>
        <begin position="10"/>
        <end position="13"/>
    </location>
</feature>
<feature type="helix" evidence="2">
    <location>
        <begin position="19"/>
        <end position="26"/>
    </location>
</feature>
<feature type="turn" evidence="2">
    <location>
        <begin position="27"/>
        <end position="29"/>
    </location>
</feature>
<feature type="helix" evidence="2">
    <location>
        <begin position="31"/>
        <end position="33"/>
    </location>
</feature>
<feature type="helix" evidence="2">
    <location>
        <begin position="39"/>
        <end position="71"/>
    </location>
</feature>
<feature type="helix" evidence="2">
    <location>
        <begin position="74"/>
        <end position="79"/>
    </location>
</feature>
<feature type="helix" evidence="2">
    <location>
        <begin position="81"/>
        <end position="83"/>
    </location>
</feature>
<feature type="strand" evidence="2">
    <location>
        <begin position="87"/>
        <end position="90"/>
    </location>
</feature>
<feature type="helix" evidence="2">
    <location>
        <begin position="98"/>
        <end position="103"/>
    </location>
</feature>
<feature type="strand" evidence="2">
    <location>
        <begin position="113"/>
        <end position="115"/>
    </location>
</feature>
<feature type="helix" evidence="2">
    <location>
        <begin position="120"/>
        <end position="126"/>
    </location>
</feature>
<feature type="helix" evidence="2">
    <location>
        <begin position="132"/>
        <end position="155"/>
    </location>
</feature>
<feature type="helix" evidence="2">
    <location>
        <begin position="159"/>
        <end position="161"/>
    </location>
</feature>
<feature type="helix" evidence="2">
    <location>
        <begin position="165"/>
        <end position="168"/>
    </location>
</feature>
<feature type="helix" evidence="2">
    <location>
        <begin position="171"/>
        <end position="181"/>
    </location>
</feature>
<feature type="helix" evidence="2">
    <location>
        <begin position="184"/>
        <end position="196"/>
    </location>
</feature>
<feature type="helix" evidence="2">
    <location>
        <begin position="198"/>
        <end position="202"/>
    </location>
</feature>
<feature type="turn" evidence="2">
    <location>
        <begin position="209"/>
        <end position="214"/>
    </location>
</feature>
<feature type="turn" evidence="2">
    <location>
        <begin position="219"/>
        <end position="222"/>
    </location>
</feature>
<feature type="helix" evidence="2">
    <location>
        <begin position="223"/>
        <end position="227"/>
    </location>
</feature>
<feature type="helix" evidence="2">
    <location>
        <begin position="230"/>
        <end position="233"/>
    </location>
</feature>
<feature type="strand" evidence="2">
    <location>
        <begin position="234"/>
        <end position="236"/>
    </location>
</feature>
<feature type="turn" evidence="2">
    <location>
        <begin position="263"/>
        <end position="265"/>
    </location>
</feature>
<feature type="helix" evidence="2">
    <location>
        <begin position="270"/>
        <end position="287"/>
    </location>
</feature>
<feature type="helix" evidence="2">
    <location>
        <begin position="301"/>
        <end position="306"/>
    </location>
</feature>
<feature type="turn" evidence="2">
    <location>
        <begin position="314"/>
        <end position="321"/>
    </location>
</feature>
<feature type="helix" evidence="2">
    <location>
        <begin position="322"/>
        <end position="327"/>
    </location>
</feature>
<feature type="helix" evidence="2">
    <location>
        <begin position="330"/>
        <end position="354"/>
    </location>
</feature>
<feature type="helix" evidence="2">
    <location>
        <begin position="365"/>
        <end position="396"/>
    </location>
</feature>
<feature type="turn" evidence="2">
    <location>
        <begin position="400"/>
        <end position="405"/>
    </location>
</feature>
<feature type="helix" evidence="2">
    <location>
        <begin position="407"/>
        <end position="413"/>
    </location>
</feature>
<feature type="helix" evidence="2">
    <location>
        <begin position="415"/>
        <end position="445"/>
    </location>
</feature>
<feature type="helix" evidence="2">
    <location>
        <begin position="449"/>
        <end position="451"/>
    </location>
</feature>
<feature type="helix" evidence="2">
    <location>
        <begin position="458"/>
        <end position="466"/>
    </location>
</feature>
<feature type="helix" evidence="2">
    <location>
        <begin position="477"/>
        <end position="479"/>
    </location>
</feature>
<feature type="helix" evidence="2">
    <location>
        <begin position="484"/>
        <end position="489"/>
    </location>
</feature>
<feature type="turn" evidence="2">
    <location>
        <begin position="490"/>
        <end position="493"/>
    </location>
</feature>
<feature type="helix" evidence="2">
    <location>
        <begin position="494"/>
        <end position="501"/>
    </location>
</feature>
<feature type="strand" evidence="2">
    <location>
        <begin position="506"/>
        <end position="509"/>
    </location>
</feature>
<feature type="helix" evidence="2">
    <location>
        <begin position="514"/>
        <end position="539"/>
    </location>
</feature>
<feature type="helix" evidence="2">
    <location>
        <begin position="550"/>
        <end position="553"/>
    </location>
</feature>
<feature type="helix" evidence="2">
    <location>
        <begin position="563"/>
        <end position="565"/>
    </location>
</feature>
<feature type="helix" evidence="2">
    <location>
        <begin position="572"/>
        <end position="603"/>
    </location>
</feature>
<feature type="helix" evidence="2">
    <location>
        <begin position="607"/>
        <end position="612"/>
    </location>
</feature>
<feature type="strand" evidence="3">
    <location>
        <begin position="613"/>
        <end position="615"/>
    </location>
</feature>
<feature type="helix" evidence="2">
    <location>
        <begin position="616"/>
        <end position="622"/>
    </location>
</feature>
<feature type="helix" evidence="2">
    <location>
        <begin position="624"/>
        <end position="627"/>
    </location>
</feature>
<feature type="turn" evidence="2">
    <location>
        <begin position="628"/>
        <end position="630"/>
    </location>
</feature>
<feature type="helix" evidence="2">
    <location>
        <begin position="631"/>
        <end position="633"/>
    </location>
</feature>
<feature type="strand" evidence="2">
    <location>
        <begin position="634"/>
        <end position="636"/>
    </location>
</feature>
<feature type="helix" evidence="2">
    <location>
        <begin position="644"/>
        <end position="665"/>
    </location>
</feature>
<feature type="helix" evidence="2">
    <location>
        <begin position="668"/>
        <end position="683"/>
    </location>
</feature>
<feature type="turn" evidence="2">
    <location>
        <begin position="686"/>
        <end position="690"/>
    </location>
</feature>
<feature type="strand" evidence="2">
    <location>
        <begin position="694"/>
        <end position="696"/>
    </location>
</feature>
<feature type="helix" evidence="2">
    <location>
        <begin position="702"/>
        <end position="733"/>
    </location>
</feature>
<dbReference type="EC" id="1.97.1.12" evidence="1"/>
<dbReference type="EMBL" id="AP000423">
    <property type="protein sequence ID" value="BAA84384.1"/>
    <property type="molecule type" value="Genomic_DNA"/>
</dbReference>
<dbReference type="RefSeq" id="NP_051058.1">
    <property type="nucleotide sequence ID" value="NC_000932.1"/>
</dbReference>
<dbReference type="PDB" id="7WFD">
    <property type="method" value="EM"/>
    <property type="resolution" value="3.25 A"/>
    <property type="chains" value="AB=1-734"/>
</dbReference>
<dbReference type="PDB" id="7WFE">
    <property type="method" value="EM"/>
    <property type="resolution" value="3.25 A"/>
    <property type="chains" value="BB=1-734"/>
</dbReference>
<dbReference type="PDB" id="7WG5">
    <property type="method" value="EM"/>
    <property type="resolution" value="3.89 A"/>
    <property type="chains" value="AB/BB=1-734"/>
</dbReference>
<dbReference type="PDB" id="8J6Z">
    <property type="method" value="EM"/>
    <property type="resolution" value="2.79 A"/>
    <property type="chains" value="B=1-734"/>
</dbReference>
<dbReference type="PDB" id="8J7A">
    <property type="method" value="EM"/>
    <property type="resolution" value="3.06 A"/>
    <property type="chains" value="B=1-734"/>
</dbReference>
<dbReference type="PDB" id="8J7B">
    <property type="method" value="EM"/>
    <property type="resolution" value="3.22 A"/>
    <property type="chains" value="B=1-734"/>
</dbReference>
<dbReference type="PDBsum" id="7WFD"/>
<dbReference type="PDBsum" id="7WFE"/>
<dbReference type="PDBsum" id="7WG5"/>
<dbReference type="PDBsum" id="8J6Z"/>
<dbReference type="PDBsum" id="8J7A"/>
<dbReference type="PDBsum" id="8J7B"/>
<dbReference type="EMDB" id="EMD-32462"/>
<dbReference type="EMDB" id="EMD-32463"/>
<dbReference type="EMDB" id="EMD-32477"/>
<dbReference type="EMDB" id="EMD-36021"/>
<dbReference type="EMDB" id="EMD-36036"/>
<dbReference type="EMDB" id="EMD-36037"/>
<dbReference type="SMR" id="P56767"/>
<dbReference type="BioGRID" id="29970">
    <property type="interactions" value="20"/>
</dbReference>
<dbReference type="FunCoup" id="P56767">
    <property type="interactions" value="275"/>
</dbReference>
<dbReference type="STRING" id="3702.P56767"/>
<dbReference type="TCDB" id="5.B.4.1.1">
    <property type="family name" value="the plant photosystem i supercomplex (psi) family"/>
</dbReference>
<dbReference type="iPTMnet" id="P56767"/>
<dbReference type="PaxDb" id="3702-ATCG00340.1"/>
<dbReference type="ProteomicsDB" id="226346"/>
<dbReference type="EnsemblPlants" id="ATCG00340.1">
    <property type="protein sequence ID" value="ATCG00340.1"/>
    <property type="gene ID" value="ATCG00340"/>
</dbReference>
<dbReference type="GeneID" id="844770"/>
<dbReference type="Gramene" id="ATCG00340.1">
    <property type="protein sequence ID" value="ATCG00340.1"/>
    <property type="gene ID" value="ATCG00340"/>
</dbReference>
<dbReference type="KEGG" id="ath:ArthCp021"/>
<dbReference type="Araport" id="ATCG00340"/>
<dbReference type="TAIR" id="ATCG00340">
    <property type="gene designation" value="PSAB"/>
</dbReference>
<dbReference type="eggNOG" id="ENOG502QRYE">
    <property type="taxonomic scope" value="Eukaryota"/>
</dbReference>
<dbReference type="HOGENOM" id="CLU_016126_1_0_1"/>
<dbReference type="InParanoid" id="P56767"/>
<dbReference type="OMA" id="EQWVADP"/>
<dbReference type="BioCyc" id="ARA:ATCG00340-MONOMER"/>
<dbReference type="BioCyc" id="MetaCyc:MONOMER-1100"/>
<dbReference type="PRO" id="PR:P56767"/>
<dbReference type="Proteomes" id="UP000006548">
    <property type="component" value="Chloroplast Pltd"/>
</dbReference>
<dbReference type="ExpressionAtlas" id="P56767">
    <property type="expression patterns" value="baseline and differential"/>
</dbReference>
<dbReference type="GO" id="GO:0009507">
    <property type="term" value="C:chloroplast"/>
    <property type="evidence" value="ECO:0007005"/>
    <property type="project" value="TAIR"/>
</dbReference>
<dbReference type="GO" id="GO:0009941">
    <property type="term" value="C:chloroplast envelope"/>
    <property type="evidence" value="ECO:0007005"/>
    <property type="project" value="TAIR"/>
</dbReference>
<dbReference type="GO" id="GO:0009534">
    <property type="term" value="C:chloroplast thylakoid"/>
    <property type="evidence" value="ECO:0007005"/>
    <property type="project" value="TAIR"/>
</dbReference>
<dbReference type="GO" id="GO:0009535">
    <property type="term" value="C:chloroplast thylakoid membrane"/>
    <property type="evidence" value="ECO:0007005"/>
    <property type="project" value="TAIR"/>
</dbReference>
<dbReference type="GO" id="GO:0009522">
    <property type="term" value="C:photosystem I"/>
    <property type="evidence" value="ECO:0007669"/>
    <property type="project" value="UniProtKB-KW"/>
</dbReference>
<dbReference type="GO" id="GO:0009536">
    <property type="term" value="C:plastid"/>
    <property type="evidence" value="ECO:0007005"/>
    <property type="project" value="TAIR"/>
</dbReference>
<dbReference type="GO" id="GO:0009579">
    <property type="term" value="C:thylakoid"/>
    <property type="evidence" value="ECO:0007005"/>
    <property type="project" value="TAIR"/>
</dbReference>
<dbReference type="GO" id="GO:0051539">
    <property type="term" value="F:4 iron, 4 sulfur cluster binding"/>
    <property type="evidence" value="ECO:0007669"/>
    <property type="project" value="UniProtKB-KW"/>
</dbReference>
<dbReference type="GO" id="GO:0016168">
    <property type="term" value="F:chlorophyll binding"/>
    <property type="evidence" value="ECO:0007669"/>
    <property type="project" value="UniProtKB-KW"/>
</dbReference>
<dbReference type="GO" id="GO:0009055">
    <property type="term" value="F:electron transfer activity"/>
    <property type="evidence" value="ECO:0007669"/>
    <property type="project" value="UniProtKB-UniRule"/>
</dbReference>
<dbReference type="GO" id="GO:0000287">
    <property type="term" value="F:magnesium ion binding"/>
    <property type="evidence" value="ECO:0007669"/>
    <property type="project" value="UniProtKB-UniRule"/>
</dbReference>
<dbReference type="GO" id="GO:0003729">
    <property type="term" value="F:mRNA binding"/>
    <property type="evidence" value="ECO:0000314"/>
    <property type="project" value="TAIR"/>
</dbReference>
<dbReference type="GO" id="GO:0016491">
    <property type="term" value="F:oxidoreductase activity"/>
    <property type="evidence" value="ECO:0007669"/>
    <property type="project" value="UniProtKB-KW"/>
</dbReference>
<dbReference type="GO" id="GO:0015979">
    <property type="term" value="P:photosynthesis"/>
    <property type="evidence" value="ECO:0007669"/>
    <property type="project" value="UniProtKB-UniRule"/>
</dbReference>
<dbReference type="FunFam" id="1.20.1130.10:FF:000001">
    <property type="entry name" value="Photosystem I P700 chlorophyll a apoprotein A2"/>
    <property type="match status" value="1"/>
</dbReference>
<dbReference type="Gene3D" id="1.20.1130.10">
    <property type="entry name" value="Photosystem I PsaA/PsaB"/>
    <property type="match status" value="1"/>
</dbReference>
<dbReference type="HAMAP" id="MF_00482">
    <property type="entry name" value="PSI_PsaB"/>
    <property type="match status" value="1"/>
</dbReference>
<dbReference type="InterPro" id="IPR001280">
    <property type="entry name" value="PSI_PsaA/B"/>
</dbReference>
<dbReference type="InterPro" id="IPR020586">
    <property type="entry name" value="PSI_PsaA/B_CS"/>
</dbReference>
<dbReference type="InterPro" id="IPR036408">
    <property type="entry name" value="PSI_PsaA/B_sf"/>
</dbReference>
<dbReference type="InterPro" id="IPR006244">
    <property type="entry name" value="PSI_PsaB"/>
</dbReference>
<dbReference type="NCBIfam" id="TIGR01336">
    <property type="entry name" value="psaB"/>
    <property type="match status" value="1"/>
</dbReference>
<dbReference type="PANTHER" id="PTHR30128">
    <property type="entry name" value="OUTER MEMBRANE PROTEIN, OMPA-RELATED"/>
    <property type="match status" value="1"/>
</dbReference>
<dbReference type="PANTHER" id="PTHR30128:SF19">
    <property type="entry name" value="PHOTOSYSTEM I P700 CHLOROPHYLL A APOPROTEIN A1-RELATED"/>
    <property type="match status" value="1"/>
</dbReference>
<dbReference type="Pfam" id="PF00223">
    <property type="entry name" value="PsaA_PsaB"/>
    <property type="match status" value="1"/>
</dbReference>
<dbReference type="PIRSF" id="PIRSF002905">
    <property type="entry name" value="PSI_A"/>
    <property type="match status" value="1"/>
</dbReference>
<dbReference type="PRINTS" id="PR00257">
    <property type="entry name" value="PHOTSYSPSAAB"/>
</dbReference>
<dbReference type="SUPFAM" id="SSF81558">
    <property type="entry name" value="Photosystem I subunits PsaA/PsaB"/>
    <property type="match status" value="1"/>
</dbReference>
<dbReference type="PROSITE" id="PS00419">
    <property type="entry name" value="PHOTOSYSTEM_I_PSAAB"/>
    <property type="match status" value="1"/>
</dbReference>
<keyword id="KW-0002">3D-structure</keyword>
<keyword id="KW-0004">4Fe-4S</keyword>
<keyword id="KW-0148">Chlorophyll</keyword>
<keyword id="KW-0150">Chloroplast</keyword>
<keyword id="KW-0157">Chromophore</keyword>
<keyword id="KW-0249">Electron transport</keyword>
<keyword id="KW-0408">Iron</keyword>
<keyword id="KW-0411">Iron-sulfur</keyword>
<keyword id="KW-0460">Magnesium</keyword>
<keyword id="KW-0472">Membrane</keyword>
<keyword id="KW-0479">Metal-binding</keyword>
<keyword id="KW-0560">Oxidoreductase</keyword>
<keyword id="KW-0602">Photosynthesis</keyword>
<keyword id="KW-0603">Photosystem I</keyword>
<keyword id="KW-0934">Plastid</keyword>
<keyword id="KW-1185">Reference proteome</keyword>
<keyword id="KW-0793">Thylakoid</keyword>
<keyword id="KW-0812">Transmembrane</keyword>
<keyword id="KW-1133">Transmembrane helix</keyword>
<keyword id="KW-0813">Transport</keyword>
<evidence type="ECO:0000255" key="1">
    <source>
        <dbReference type="HAMAP-Rule" id="MF_00482"/>
    </source>
</evidence>
<evidence type="ECO:0007829" key="2">
    <source>
        <dbReference type="PDB" id="8J6Z"/>
    </source>
</evidence>
<evidence type="ECO:0007829" key="3">
    <source>
        <dbReference type="PDB" id="8J7B"/>
    </source>
</evidence>
<comment type="function">
    <text evidence="1">PsaA and PsaB bind P700, the primary electron donor of photosystem I (PSI), as well as the electron acceptors A0, A1 and FX. PSI is a plastocyanin-ferredoxin oxidoreductase, converting photonic excitation into a charge separation, which transfers an electron from the donor P700 chlorophyll pair to the spectroscopically characterized acceptors A0, A1, FX, FA and FB in turn. Oxidized P700 is reduced on the lumenal side of the thylakoid membrane by plastocyanin.</text>
</comment>
<comment type="catalytic activity">
    <reaction evidence="1">
        <text>reduced [plastocyanin] + hnu + oxidized [2Fe-2S]-[ferredoxin] = oxidized [plastocyanin] + reduced [2Fe-2S]-[ferredoxin]</text>
        <dbReference type="Rhea" id="RHEA:30407"/>
        <dbReference type="Rhea" id="RHEA-COMP:10000"/>
        <dbReference type="Rhea" id="RHEA-COMP:10001"/>
        <dbReference type="Rhea" id="RHEA-COMP:10039"/>
        <dbReference type="Rhea" id="RHEA-COMP:10040"/>
        <dbReference type="ChEBI" id="CHEBI:29036"/>
        <dbReference type="ChEBI" id="CHEBI:30212"/>
        <dbReference type="ChEBI" id="CHEBI:33737"/>
        <dbReference type="ChEBI" id="CHEBI:33738"/>
        <dbReference type="ChEBI" id="CHEBI:49552"/>
        <dbReference type="EC" id="1.97.1.12"/>
    </reaction>
</comment>
<comment type="cofactor">
    <text evidence="1">P700 is a chlorophyll a/chlorophyll a' dimer, A0 is one or more chlorophyll a, A1 is one or both phylloquinones and FX is a shared 4Fe-4S iron-sulfur center.</text>
</comment>
<comment type="subunit">
    <text evidence="1">The PsaA/B heterodimer binds the P700 chlorophyll special pair and subsequent electron acceptors. PSI consists of a core antenna complex that captures photons, and an electron transfer chain that converts photonic excitation into a charge separation. The eukaryotic PSI reaction center is composed of at least 11 subunits.</text>
</comment>
<comment type="subcellular location">
    <subcellularLocation>
        <location evidence="1">Plastid</location>
        <location evidence="1">Chloroplast thylakoid membrane</location>
        <topology evidence="1">Multi-pass membrane protein</topology>
    </subcellularLocation>
</comment>
<comment type="similarity">
    <text evidence="1">Belongs to the PsaA/PsaB family.</text>
</comment>
<sequence length="734" mass="82475">MALRFPRFSQGLAQDPTTRRIWFGIATAHDFESHDDITEERLYQNIFASHFGQLAIIFLWTSGNLFHVAWQGNFETWVQDPLHVRPIAHAIWDPHFGQPAVEAFTRGGALGPVNIAYSGVYQWWYTIGLRTNEDLYTGALFLLFLSALSLIGGWLHLQPKWKPRVSWFKNAESRLNHHLSGLFGVSSLAWTGHLVHVAIPASRGEYVRWNNFLNVLPHPQGLGPLFTGQWNLYAQNPDSSSHLFGTSQGSGTAILTLLGGFHPQTQSLWLTDMAHHHLAIAILFLIAGHMYRTNFGIGHSIKDLLEAHIPPGGRLGRGHKGLYDTINNSIHFQLGLALASLGVITSLVAQHMYSLPAYAFIAQDFTTQAALYTHHQYIAGFIMTGAFAHGAIFFIRDYNPEQNEDNVLARMLDHKEAIISHLSWASLFLGFHTLGLYVHNDVMLAFGTPEKQILIEPIFAQWIQSAHGKTSYGFDVLLSSTSGPAFNAGRSIWLPGWLNAINENSNSLFLTIGPGDFLVHHAIALGLHTTTLILVKGALDARGSKLMPDKKDFGYSFPCDGPGRGGTCDISAWDAFYLAVFWMLNTIGWVTFYWHWKHITLWQGNVSQFNESSTYLMGWLRDYLWLNSSQLINGYNPFGMNSLSVWAWMFLFGHLVWATGFMFLISWRGYWQELIETLAWAHERTPLANLIRWKDKPVALSIVQARLVGLAHFSVGYIFTYAAFLIASTSGKFG</sequence>
<protein>
    <recommendedName>
        <fullName evidence="1">Photosystem I P700 chlorophyll a apoprotein A2</fullName>
        <ecNumber evidence="1">1.97.1.12</ecNumber>
    </recommendedName>
    <alternativeName>
        <fullName evidence="1">PSI-B</fullName>
    </alternativeName>
    <alternativeName>
        <fullName evidence="1">PsaB</fullName>
    </alternativeName>
</protein>
<accession>P56767</accession>